<keyword id="KW-0687">Ribonucleoprotein</keyword>
<keyword id="KW-0689">Ribosomal protein</keyword>
<keyword id="KW-0694">RNA-binding</keyword>
<keyword id="KW-0699">rRNA-binding</keyword>
<protein>
    <recommendedName>
        <fullName evidence="1">Large ribosomal subunit protein uL14</fullName>
    </recommendedName>
    <alternativeName>
        <fullName evidence="2">50S ribosomal protein L14</fullName>
    </alternativeName>
</protein>
<comment type="function">
    <text evidence="1">Binds to 23S rRNA. Forms part of two intersubunit bridges in the 70S ribosome.</text>
</comment>
<comment type="subunit">
    <text evidence="1">Part of the 50S ribosomal subunit. Forms a cluster with proteins L3 and L19. In the 70S ribosome, L14 and L19 interact and together make contacts with the 16S rRNA in bridges B5 and B8.</text>
</comment>
<comment type="similarity">
    <text evidence="1">Belongs to the universal ribosomal protein uL14 family.</text>
</comment>
<evidence type="ECO:0000255" key="1">
    <source>
        <dbReference type="HAMAP-Rule" id="MF_01367"/>
    </source>
</evidence>
<evidence type="ECO:0000305" key="2"/>
<accession>Q6HPP8</accession>
<organism>
    <name type="scientific">Bacillus thuringiensis subsp. konkukian (strain 97-27)</name>
    <dbReference type="NCBI Taxonomy" id="281309"/>
    <lineage>
        <taxon>Bacteria</taxon>
        <taxon>Bacillati</taxon>
        <taxon>Bacillota</taxon>
        <taxon>Bacilli</taxon>
        <taxon>Bacillales</taxon>
        <taxon>Bacillaceae</taxon>
        <taxon>Bacillus</taxon>
        <taxon>Bacillus cereus group</taxon>
    </lineage>
</organism>
<proteinExistence type="inferred from homology"/>
<name>RL14_BACHK</name>
<feature type="chain" id="PRO_1000055516" description="Large ribosomal subunit protein uL14">
    <location>
        <begin position="1"/>
        <end position="122"/>
    </location>
</feature>
<reference key="1">
    <citation type="journal article" date="2006" name="J. Bacteriol.">
        <title>Pathogenomic sequence analysis of Bacillus cereus and Bacillus thuringiensis isolates closely related to Bacillus anthracis.</title>
        <authorList>
            <person name="Han C.S."/>
            <person name="Xie G."/>
            <person name="Challacombe J.F."/>
            <person name="Altherr M.R."/>
            <person name="Bhotika S.S."/>
            <person name="Bruce D."/>
            <person name="Campbell C.S."/>
            <person name="Campbell M.L."/>
            <person name="Chen J."/>
            <person name="Chertkov O."/>
            <person name="Cleland C."/>
            <person name="Dimitrijevic M."/>
            <person name="Doggett N.A."/>
            <person name="Fawcett J.J."/>
            <person name="Glavina T."/>
            <person name="Goodwin L.A."/>
            <person name="Hill K.K."/>
            <person name="Hitchcock P."/>
            <person name="Jackson P.J."/>
            <person name="Keim P."/>
            <person name="Kewalramani A.R."/>
            <person name="Longmire J."/>
            <person name="Lucas S."/>
            <person name="Malfatti S."/>
            <person name="McMurry K."/>
            <person name="Meincke L.J."/>
            <person name="Misra M."/>
            <person name="Moseman B.L."/>
            <person name="Mundt M."/>
            <person name="Munk A.C."/>
            <person name="Okinaka R.T."/>
            <person name="Parson-Quintana B."/>
            <person name="Reilly L.P."/>
            <person name="Richardson P."/>
            <person name="Robinson D.L."/>
            <person name="Rubin E."/>
            <person name="Saunders E."/>
            <person name="Tapia R."/>
            <person name="Tesmer J.G."/>
            <person name="Thayer N."/>
            <person name="Thompson L.S."/>
            <person name="Tice H."/>
            <person name="Ticknor L.O."/>
            <person name="Wills P.L."/>
            <person name="Brettin T.S."/>
            <person name="Gilna P."/>
        </authorList>
    </citation>
    <scope>NUCLEOTIDE SEQUENCE [LARGE SCALE GENOMIC DNA]</scope>
    <source>
        <strain>97-27</strain>
    </source>
</reference>
<sequence>MIQQESRLKVADNSGARELLTIKVLGGSGRKYANIGDIIVATVKQATPGGVVKKGDVVKAVVVRTKSGARRPDGSYIKFDENAAVIIKDDKSPRGTRIFGPVARELRDSNFMKIVSLAPEVL</sequence>
<gene>
    <name evidence="1" type="primary">rplN</name>
    <name type="ordered locus">BT9727_0116</name>
</gene>
<dbReference type="EMBL" id="AE017355">
    <property type="protein sequence ID" value="AAT63868.1"/>
    <property type="molecule type" value="Genomic_DNA"/>
</dbReference>
<dbReference type="RefSeq" id="WP_000615912.1">
    <property type="nucleotide sequence ID" value="NC_005957.1"/>
</dbReference>
<dbReference type="RefSeq" id="YP_034472.1">
    <property type="nucleotide sequence ID" value="NC_005957.1"/>
</dbReference>
<dbReference type="SMR" id="Q6HPP8"/>
<dbReference type="GeneID" id="93010933"/>
<dbReference type="KEGG" id="btk:BT9727_0116"/>
<dbReference type="PATRIC" id="fig|281309.8.peg.117"/>
<dbReference type="HOGENOM" id="CLU_095071_2_1_9"/>
<dbReference type="PRO" id="PR:Q6HPP8"/>
<dbReference type="Proteomes" id="UP000001301">
    <property type="component" value="Chromosome"/>
</dbReference>
<dbReference type="GO" id="GO:0022625">
    <property type="term" value="C:cytosolic large ribosomal subunit"/>
    <property type="evidence" value="ECO:0007669"/>
    <property type="project" value="TreeGrafter"/>
</dbReference>
<dbReference type="GO" id="GO:0070180">
    <property type="term" value="F:large ribosomal subunit rRNA binding"/>
    <property type="evidence" value="ECO:0007669"/>
    <property type="project" value="TreeGrafter"/>
</dbReference>
<dbReference type="GO" id="GO:0003735">
    <property type="term" value="F:structural constituent of ribosome"/>
    <property type="evidence" value="ECO:0007669"/>
    <property type="project" value="InterPro"/>
</dbReference>
<dbReference type="GO" id="GO:0006412">
    <property type="term" value="P:translation"/>
    <property type="evidence" value="ECO:0007669"/>
    <property type="project" value="UniProtKB-UniRule"/>
</dbReference>
<dbReference type="CDD" id="cd00337">
    <property type="entry name" value="Ribosomal_uL14"/>
    <property type="match status" value="1"/>
</dbReference>
<dbReference type="FunFam" id="2.40.150.20:FF:000001">
    <property type="entry name" value="50S ribosomal protein L14"/>
    <property type="match status" value="1"/>
</dbReference>
<dbReference type="Gene3D" id="2.40.150.20">
    <property type="entry name" value="Ribosomal protein L14"/>
    <property type="match status" value="1"/>
</dbReference>
<dbReference type="HAMAP" id="MF_01367">
    <property type="entry name" value="Ribosomal_uL14"/>
    <property type="match status" value="1"/>
</dbReference>
<dbReference type="InterPro" id="IPR000218">
    <property type="entry name" value="Ribosomal_uL14"/>
</dbReference>
<dbReference type="InterPro" id="IPR005745">
    <property type="entry name" value="Ribosomal_uL14_bac-type"/>
</dbReference>
<dbReference type="InterPro" id="IPR019972">
    <property type="entry name" value="Ribosomal_uL14_CS"/>
</dbReference>
<dbReference type="InterPro" id="IPR036853">
    <property type="entry name" value="Ribosomal_uL14_sf"/>
</dbReference>
<dbReference type="NCBIfam" id="TIGR01067">
    <property type="entry name" value="rplN_bact"/>
    <property type="match status" value="1"/>
</dbReference>
<dbReference type="PANTHER" id="PTHR11761">
    <property type="entry name" value="50S/60S RIBOSOMAL PROTEIN L14/L23"/>
    <property type="match status" value="1"/>
</dbReference>
<dbReference type="PANTHER" id="PTHR11761:SF3">
    <property type="entry name" value="LARGE RIBOSOMAL SUBUNIT PROTEIN UL14M"/>
    <property type="match status" value="1"/>
</dbReference>
<dbReference type="Pfam" id="PF00238">
    <property type="entry name" value="Ribosomal_L14"/>
    <property type="match status" value="1"/>
</dbReference>
<dbReference type="SMART" id="SM01374">
    <property type="entry name" value="Ribosomal_L14"/>
    <property type="match status" value="1"/>
</dbReference>
<dbReference type="SUPFAM" id="SSF50193">
    <property type="entry name" value="Ribosomal protein L14"/>
    <property type="match status" value="1"/>
</dbReference>
<dbReference type="PROSITE" id="PS00049">
    <property type="entry name" value="RIBOSOMAL_L14"/>
    <property type="match status" value="1"/>
</dbReference>